<evidence type="ECO:0000255" key="1">
    <source>
        <dbReference type="HAMAP-Rule" id="MF_01419"/>
    </source>
</evidence>
<feature type="chain" id="PRO_1000024295" description="Phosphoglycolate phosphatase">
    <location>
        <begin position="1"/>
        <end position="238"/>
    </location>
</feature>
<feature type="active site" description="Nucleophile" evidence="1">
    <location>
        <position position="8"/>
    </location>
</feature>
<feature type="binding site" evidence="1">
    <location>
        <position position="8"/>
    </location>
    <ligand>
        <name>Mg(2+)</name>
        <dbReference type="ChEBI" id="CHEBI:18420"/>
    </ligand>
</feature>
<feature type="binding site" evidence="1">
    <location>
        <position position="10"/>
    </location>
    <ligand>
        <name>Mg(2+)</name>
        <dbReference type="ChEBI" id="CHEBI:18420"/>
    </ligand>
</feature>
<feature type="binding site" evidence="1">
    <location>
        <position position="163"/>
    </location>
    <ligand>
        <name>substrate</name>
    </ligand>
</feature>
<feature type="binding site" evidence="1">
    <location>
        <position position="186"/>
    </location>
    <ligand>
        <name>Mg(2+)</name>
        <dbReference type="ChEBI" id="CHEBI:18420"/>
    </ligand>
</feature>
<feature type="binding site" evidence="1">
    <location>
        <position position="190"/>
    </location>
    <ligand>
        <name>Mg(2+)</name>
        <dbReference type="ChEBI" id="CHEBI:18420"/>
    </ligand>
</feature>
<reference key="1">
    <citation type="journal article" date="2009" name="BMC Genomics">
        <title>The complete genome sequence of Staphylothermus marinus reveals differences in sulfur metabolism among heterotrophic Crenarchaeota.</title>
        <authorList>
            <person name="Anderson I.J."/>
            <person name="Dharmarajan L."/>
            <person name="Rodriguez J."/>
            <person name="Hooper S."/>
            <person name="Porat I."/>
            <person name="Ulrich L.E."/>
            <person name="Elkins J.G."/>
            <person name="Mavromatis K."/>
            <person name="Sun H."/>
            <person name="Land M."/>
            <person name="Lapidus A."/>
            <person name="Lucas S."/>
            <person name="Barry K."/>
            <person name="Huber H."/>
            <person name="Zhulin I.B."/>
            <person name="Whitman W.B."/>
            <person name="Mukhopadhyay B."/>
            <person name="Woese C."/>
            <person name="Bristow J."/>
            <person name="Kyrpides N."/>
        </authorList>
    </citation>
    <scope>NUCLEOTIDE SEQUENCE [LARGE SCALE GENOMIC DNA]</scope>
    <source>
        <strain>ATCC 43588 / DSM 3639 / JCM 9404 / F1</strain>
    </source>
</reference>
<reference key="2">
    <citation type="journal article" date="2009" name="Stand. Genomic Sci.">
        <title>Complete genome sequence of Staphylothermus marinus Stetter and Fiala 1986 type strain F1.</title>
        <authorList>
            <person name="Anderson I.J."/>
            <person name="Sun H."/>
            <person name="Lapidus A."/>
            <person name="Copeland A."/>
            <person name="Glavina Del Rio T."/>
            <person name="Tice H."/>
            <person name="Dalin E."/>
            <person name="Lucas S."/>
            <person name="Barry K."/>
            <person name="Land M."/>
            <person name="Richardson P."/>
            <person name="Huber H."/>
            <person name="Kyrpides N.C."/>
        </authorList>
    </citation>
    <scope>NUCLEOTIDE SEQUENCE [LARGE SCALE GENOMIC DNA]</scope>
    <source>
        <strain>ATCC 43588 / DSM 3639 / JCM 9404 / F1</strain>
    </source>
</reference>
<proteinExistence type="inferred from homology"/>
<accession>A3DNN7</accession>
<protein>
    <recommendedName>
        <fullName evidence="1">Phosphoglycolate phosphatase</fullName>
        <shortName evidence="1">PGP</shortName>
        <shortName evidence="1">PGPase</shortName>
        <ecNumber evidence="1">3.1.3.18</ecNumber>
    </recommendedName>
</protein>
<gene>
    <name type="ordered locus">Smar_1152</name>
</gene>
<name>PGP_STAMF</name>
<keyword id="KW-0119">Carbohydrate metabolism</keyword>
<keyword id="KW-0378">Hydrolase</keyword>
<keyword id="KW-0460">Magnesium</keyword>
<keyword id="KW-0479">Metal-binding</keyword>
<keyword id="KW-1185">Reference proteome</keyword>
<sequence>MIRLAAFDIDGTLTINRSSTVLCLEAIDALRKLEKNGVIVVLVSSNALPVVVGLKKYIGLSGPAIGETGALIYYGEEEIVATTKYSAKQAYLDVLEKYNEYVYGSWQNMFRLHDYALKIRKQYLSKDNEIYSLIKEYVENKYPYIKVGYSGYAIHLTPKDTGKGKALKQIMEKHGIRREETMGVGDSIMDWEFIKETKIKVAVANADPELRRKADIVTTKPSGYGVVEIVEKILDKPP</sequence>
<dbReference type="EC" id="3.1.3.18" evidence="1"/>
<dbReference type="EMBL" id="CP000575">
    <property type="protein sequence ID" value="ABN70247.1"/>
    <property type="molecule type" value="Genomic_DNA"/>
</dbReference>
<dbReference type="RefSeq" id="WP_011839438.1">
    <property type="nucleotide sequence ID" value="NC_009033.1"/>
</dbReference>
<dbReference type="SMR" id="A3DNN7"/>
<dbReference type="STRING" id="399550.Smar_1152"/>
<dbReference type="GeneID" id="4907785"/>
<dbReference type="KEGG" id="smr:Smar_1152"/>
<dbReference type="eggNOG" id="arCOG01213">
    <property type="taxonomic scope" value="Archaea"/>
</dbReference>
<dbReference type="HOGENOM" id="CLU_044146_2_0_2"/>
<dbReference type="OrthoDB" id="120822at2157"/>
<dbReference type="Proteomes" id="UP000000254">
    <property type="component" value="Chromosome"/>
</dbReference>
<dbReference type="GO" id="GO:0005829">
    <property type="term" value="C:cytosol"/>
    <property type="evidence" value="ECO:0007669"/>
    <property type="project" value="TreeGrafter"/>
</dbReference>
<dbReference type="GO" id="GO:0000287">
    <property type="term" value="F:magnesium ion binding"/>
    <property type="evidence" value="ECO:0007669"/>
    <property type="project" value="InterPro"/>
</dbReference>
<dbReference type="GO" id="GO:0008967">
    <property type="term" value="F:phosphoglycolate phosphatase activity"/>
    <property type="evidence" value="ECO:0007669"/>
    <property type="project" value="UniProtKB-UniRule"/>
</dbReference>
<dbReference type="CDD" id="cd07514">
    <property type="entry name" value="HAD_Pase"/>
    <property type="match status" value="1"/>
</dbReference>
<dbReference type="Gene3D" id="3.90.1070.10">
    <property type="match status" value="1"/>
</dbReference>
<dbReference type="Gene3D" id="3.40.50.1000">
    <property type="entry name" value="HAD superfamily/HAD-like"/>
    <property type="match status" value="1"/>
</dbReference>
<dbReference type="HAMAP" id="MF_01419">
    <property type="entry name" value="GPH_hydrolase_arch"/>
    <property type="match status" value="1"/>
</dbReference>
<dbReference type="InterPro" id="IPR036412">
    <property type="entry name" value="HAD-like_sf"/>
</dbReference>
<dbReference type="InterPro" id="IPR006379">
    <property type="entry name" value="HAD-SF_hydro_IIB"/>
</dbReference>
<dbReference type="InterPro" id="IPR023214">
    <property type="entry name" value="HAD_sf"/>
</dbReference>
<dbReference type="InterPro" id="IPR006382">
    <property type="entry name" value="PGPase"/>
</dbReference>
<dbReference type="NCBIfam" id="TIGR01484">
    <property type="entry name" value="HAD-SF-IIB"/>
    <property type="match status" value="1"/>
</dbReference>
<dbReference type="NCBIfam" id="TIGR01487">
    <property type="entry name" value="Pglycolate_arch"/>
    <property type="match status" value="1"/>
</dbReference>
<dbReference type="NCBIfam" id="TIGR01482">
    <property type="entry name" value="SPP-subfamily"/>
    <property type="match status" value="1"/>
</dbReference>
<dbReference type="PANTHER" id="PTHR10000:SF8">
    <property type="entry name" value="HAD SUPERFAMILY HYDROLASE-LIKE, TYPE 3"/>
    <property type="match status" value="1"/>
</dbReference>
<dbReference type="PANTHER" id="PTHR10000">
    <property type="entry name" value="PHOSPHOSERINE PHOSPHATASE"/>
    <property type="match status" value="1"/>
</dbReference>
<dbReference type="Pfam" id="PF08282">
    <property type="entry name" value="Hydrolase_3"/>
    <property type="match status" value="2"/>
</dbReference>
<dbReference type="SFLD" id="SFLDG01144">
    <property type="entry name" value="C2.B.4:_PGP_Like"/>
    <property type="match status" value="1"/>
</dbReference>
<dbReference type="SFLD" id="SFLDF00446">
    <property type="entry name" value="phosphoglycolate_phosphatase_3"/>
    <property type="match status" value="1"/>
</dbReference>
<dbReference type="SUPFAM" id="SSF56784">
    <property type="entry name" value="HAD-like"/>
    <property type="match status" value="1"/>
</dbReference>
<comment type="function">
    <text evidence="1">Catalyzes the dephosphorylation of 2-phosphoglycolate.</text>
</comment>
<comment type="catalytic activity">
    <reaction evidence="1">
        <text>2-phosphoglycolate + H2O = glycolate + phosphate</text>
        <dbReference type="Rhea" id="RHEA:14369"/>
        <dbReference type="ChEBI" id="CHEBI:15377"/>
        <dbReference type="ChEBI" id="CHEBI:29805"/>
        <dbReference type="ChEBI" id="CHEBI:43474"/>
        <dbReference type="ChEBI" id="CHEBI:58033"/>
        <dbReference type="EC" id="3.1.3.18"/>
    </reaction>
</comment>
<comment type="cofactor">
    <cofactor evidence="1">
        <name>Mg(2+)</name>
        <dbReference type="ChEBI" id="CHEBI:18420"/>
    </cofactor>
</comment>
<comment type="similarity">
    <text evidence="1">Belongs to the archaeal SPP-like hydrolase family.</text>
</comment>
<organism>
    <name type="scientific">Staphylothermus marinus (strain ATCC 43588 / DSM 3639 / JCM 9404 / F1)</name>
    <dbReference type="NCBI Taxonomy" id="399550"/>
    <lineage>
        <taxon>Archaea</taxon>
        <taxon>Thermoproteota</taxon>
        <taxon>Thermoprotei</taxon>
        <taxon>Desulfurococcales</taxon>
        <taxon>Desulfurococcaceae</taxon>
        <taxon>Staphylothermus</taxon>
    </lineage>
</organism>